<proteinExistence type="inferred from homology"/>
<name>DCD_ACIBY</name>
<protein>
    <recommendedName>
        <fullName evidence="1">dCTP deaminase</fullName>
        <ecNumber evidence="1">3.5.4.13</ecNumber>
    </recommendedName>
    <alternativeName>
        <fullName evidence="1">Deoxycytidine triphosphate deaminase</fullName>
    </alternativeName>
</protein>
<evidence type="ECO:0000255" key="1">
    <source>
        <dbReference type="HAMAP-Rule" id="MF_00146"/>
    </source>
</evidence>
<gene>
    <name evidence="1" type="primary">dcd</name>
    <name type="ordered locus">ABAYE3025</name>
</gene>
<feature type="chain" id="PRO_1000096401" description="dCTP deaminase">
    <location>
        <begin position="1"/>
        <end position="189"/>
    </location>
</feature>
<feature type="active site" description="Proton donor/acceptor" evidence="1">
    <location>
        <position position="138"/>
    </location>
</feature>
<feature type="binding site" evidence="1">
    <location>
        <begin position="112"/>
        <end position="117"/>
    </location>
    <ligand>
        <name>dCTP</name>
        <dbReference type="ChEBI" id="CHEBI:61481"/>
    </ligand>
</feature>
<feature type="binding site" evidence="1">
    <location>
        <begin position="136"/>
        <end position="138"/>
    </location>
    <ligand>
        <name>dCTP</name>
        <dbReference type="ChEBI" id="CHEBI:61481"/>
    </ligand>
</feature>
<feature type="binding site" evidence="1">
    <location>
        <position position="157"/>
    </location>
    <ligand>
        <name>dCTP</name>
        <dbReference type="ChEBI" id="CHEBI:61481"/>
    </ligand>
</feature>
<feature type="binding site" evidence="1">
    <location>
        <position position="171"/>
    </location>
    <ligand>
        <name>dCTP</name>
        <dbReference type="ChEBI" id="CHEBI:61481"/>
    </ligand>
</feature>
<feature type="binding site" evidence="1">
    <location>
        <position position="181"/>
    </location>
    <ligand>
        <name>dCTP</name>
        <dbReference type="ChEBI" id="CHEBI:61481"/>
    </ligand>
</feature>
<keyword id="KW-0378">Hydrolase</keyword>
<keyword id="KW-0546">Nucleotide metabolism</keyword>
<keyword id="KW-0547">Nucleotide-binding</keyword>
<organism>
    <name type="scientific">Acinetobacter baumannii (strain AYE)</name>
    <dbReference type="NCBI Taxonomy" id="509173"/>
    <lineage>
        <taxon>Bacteria</taxon>
        <taxon>Pseudomonadati</taxon>
        <taxon>Pseudomonadota</taxon>
        <taxon>Gammaproteobacteria</taxon>
        <taxon>Moraxellales</taxon>
        <taxon>Moraxellaceae</taxon>
        <taxon>Acinetobacter</taxon>
        <taxon>Acinetobacter calcoaceticus/baumannii complex</taxon>
    </lineage>
</organism>
<sequence length="189" mass="21442">MAIKSDRWIREMSEKHGMIEPYAENQVRFDKNGEKLISYGVSSYGYDVRCAREFKVFTNVHSAIVDPKNFDEKSFIDIESDVCIIPPNSFALARTIEYFRIPRNVLTVCLGKSTYARCGIIVNVTPLEPEWEGHVTLEFSNTTNLPARIYAGEGVAQMLFFESDEVCETSYKDRGGKYQGQTGVTLPKT</sequence>
<accession>B0V8B3</accession>
<comment type="function">
    <text evidence="1">Catalyzes the deamination of dCTP to dUTP.</text>
</comment>
<comment type="catalytic activity">
    <reaction evidence="1">
        <text>dCTP + H2O + H(+) = dUTP + NH4(+)</text>
        <dbReference type="Rhea" id="RHEA:22680"/>
        <dbReference type="ChEBI" id="CHEBI:15377"/>
        <dbReference type="ChEBI" id="CHEBI:15378"/>
        <dbReference type="ChEBI" id="CHEBI:28938"/>
        <dbReference type="ChEBI" id="CHEBI:61481"/>
        <dbReference type="ChEBI" id="CHEBI:61555"/>
        <dbReference type="EC" id="3.5.4.13"/>
    </reaction>
</comment>
<comment type="pathway">
    <text evidence="1">Pyrimidine metabolism; dUMP biosynthesis; dUMP from dCTP (dUTP route): step 1/2.</text>
</comment>
<comment type="subunit">
    <text evidence="1">Homotrimer.</text>
</comment>
<comment type="similarity">
    <text evidence="1">Belongs to the dCTP deaminase family.</text>
</comment>
<dbReference type="EC" id="3.5.4.13" evidence="1"/>
<dbReference type="EMBL" id="CU459141">
    <property type="protein sequence ID" value="CAM87845.1"/>
    <property type="molecule type" value="Genomic_DNA"/>
</dbReference>
<dbReference type="RefSeq" id="WP_000985728.1">
    <property type="nucleotide sequence ID" value="NZ_JBDGFB010000027.1"/>
</dbReference>
<dbReference type="SMR" id="B0V8B3"/>
<dbReference type="EnsemblBacteria" id="CAM87845">
    <property type="protein sequence ID" value="CAM87845"/>
    <property type="gene ID" value="ABAYE3025"/>
</dbReference>
<dbReference type="GeneID" id="92892716"/>
<dbReference type="KEGG" id="aby:ABAYE3025"/>
<dbReference type="HOGENOM" id="CLU_087476_4_0_6"/>
<dbReference type="UniPathway" id="UPA00610">
    <property type="reaction ID" value="UER00665"/>
</dbReference>
<dbReference type="GO" id="GO:0008829">
    <property type="term" value="F:dCTP deaminase activity"/>
    <property type="evidence" value="ECO:0007669"/>
    <property type="project" value="UniProtKB-UniRule"/>
</dbReference>
<dbReference type="GO" id="GO:0000166">
    <property type="term" value="F:nucleotide binding"/>
    <property type="evidence" value="ECO:0007669"/>
    <property type="project" value="UniProtKB-KW"/>
</dbReference>
<dbReference type="GO" id="GO:0006226">
    <property type="term" value="P:dUMP biosynthetic process"/>
    <property type="evidence" value="ECO:0007669"/>
    <property type="project" value="UniProtKB-UniPathway"/>
</dbReference>
<dbReference type="GO" id="GO:0006229">
    <property type="term" value="P:dUTP biosynthetic process"/>
    <property type="evidence" value="ECO:0007669"/>
    <property type="project" value="UniProtKB-UniRule"/>
</dbReference>
<dbReference type="GO" id="GO:0015949">
    <property type="term" value="P:nucleobase-containing small molecule interconversion"/>
    <property type="evidence" value="ECO:0007669"/>
    <property type="project" value="TreeGrafter"/>
</dbReference>
<dbReference type="CDD" id="cd07557">
    <property type="entry name" value="trimeric_dUTPase"/>
    <property type="match status" value="1"/>
</dbReference>
<dbReference type="FunFam" id="2.70.40.10:FF:000001">
    <property type="entry name" value="dCTP deaminase"/>
    <property type="match status" value="1"/>
</dbReference>
<dbReference type="Gene3D" id="2.70.40.10">
    <property type="match status" value="1"/>
</dbReference>
<dbReference type="HAMAP" id="MF_00146">
    <property type="entry name" value="dCTP_deaminase"/>
    <property type="match status" value="1"/>
</dbReference>
<dbReference type="InterPro" id="IPR011962">
    <property type="entry name" value="dCTP_deaminase"/>
</dbReference>
<dbReference type="InterPro" id="IPR036157">
    <property type="entry name" value="dUTPase-like_sf"/>
</dbReference>
<dbReference type="InterPro" id="IPR033704">
    <property type="entry name" value="dUTPase_trimeric"/>
</dbReference>
<dbReference type="NCBIfam" id="TIGR02274">
    <property type="entry name" value="dCTP_deam"/>
    <property type="match status" value="1"/>
</dbReference>
<dbReference type="PANTHER" id="PTHR42680">
    <property type="entry name" value="DCTP DEAMINASE"/>
    <property type="match status" value="1"/>
</dbReference>
<dbReference type="PANTHER" id="PTHR42680:SF3">
    <property type="entry name" value="DCTP DEAMINASE"/>
    <property type="match status" value="1"/>
</dbReference>
<dbReference type="Pfam" id="PF22769">
    <property type="entry name" value="DCD"/>
    <property type="match status" value="1"/>
</dbReference>
<dbReference type="SUPFAM" id="SSF51283">
    <property type="entry name" value="dUTPase-like"/>
    <property type="match status" value="1"/>
</dbReference>
<reference key="1">
    <citation type="journal article" date="2008" name="PLoS ONE">
        <title>Comparative analysis of Acinetobacters: three genomes for three lifestyles.</title>
        <authorList>
            <person name="Vallenet D."/>
            <person name="Nordmann P."/>
            <person name="Barbe V."/>
            <person name="Poirel L."/>
            <person name="Mangenot S."/>
            <person name="Bataille E."/>
            <person name="Dossat C."/>
            <person name="Gas S."/>
            <person name="Kreimeyer A."/>
            <person name="Lenoble P."/>
            <person name="Oztas S."/>
            <person name="Poulain J."/>
            <person name="Segurens B."/>
            <person name="Robert C."/>
            <person name="Abergel C."/>
            <person name="Claverie J.-M."/>
            <person name="Raoult D."/>
            <person name="Medigue C."/>
            <person name="Weissenbach J."/>
            <person name="Cruveiller S."/>
        </authorList>
    </citation>
    <scope>NUCLEOTIDE SEQUENCE [LARGE SCALE GENOMIC DNA]</scope>
    <source>
        <strain>AYE</strain>
    </source>
</reference>